<feature type="chain" id="PRO_0000229946" description="Tetraacyldisaccharide 4'-kinase">
    <location>
        <begin position="1"/>
        <end position="341"/>
    </location>
</feature>
<feature type="binding site" evidence="1">
    <location>
        <begin position="54"/>
        <end position="61"/>
    </location>
    <ligand>
        <name>ATP</name>
        <dbReference type="ChEBI" id="CHEBI:30616"/>
    </ligand>
</feature>
<name>LPXK_BRUA2</name>
<organism>
    <name type="scientific">Brucella abortus (strain 2308)</name>
    <dbReference type="NCBI Taxonomy" id="359391"/>
    <lineage>
        <taxon>Bacteria</taxon>
        <taxon>Pseudomonadati</taxon>
        <taxon>Pseudomonadota</taxon>
        <taxon>Alphaproteobacteria</taxon>
        <taxon>Hyphomicrobiales</taxon>
        <taxon>Brucellaceae</taxon>
        <taxon>Brucella/Ochrobactrum group</taxon>
        <taxon>Brucella</taxon>
    </lineage>
</organism>
<sequence>MASEAPPFWWDEPDWRALALAPAAWIYGRVSGRRLIRAVPPRVSLPVLCVGNFTVGGAGKTPTAIAFARGAIARGMKPGIVSRGYGGNYSGLHLVDPGHDGARHVGDEPLLLARHAAVALSPDRVKAAEYLKSLGCDFIIMDDGFQSARLHADFSLLVVDASRGIGNGRVIPAGPLRAPLTDQMRKTDALLCIGKGNGADFVIRQAARAGRPIYHAQLRPSSSATVAGRRWLAFAGIGNPDKFYESVRQAGGEVVETHSFADHYSFEPDDIRGLVDMARRQGLGLITTAKDHVRLATMPGVPPEFLSKLAVLDVDLEFDRTDALDHILDTVVERFKSRLHG</sequence>
<protein>
    <recommendedName>
        <fullName evidence="1">Tetraacyldisaccharide 4'-kinase</fullName>
        <ecNumber evidence="1">2.7.1.130</ecNumber>
    </recommendedName>
    <alternativeName>
        <fullName evidence="1">Lipid A 4'-kinase</fullName>
    </alternativeName>
</protein>
<gene>
    <name evidence="1" type="primary">lpxK</name>
    <name type="ordered locus">BAB2_0210</name>
</gene>
<reference key="1">
    <citation type="journal article" date="2005" name="Infect. Immun.">
        <title>Whole-genome analyses of speciation events in pathogenic Brucellae.</title>
        <authorList>
            <person name="Chain P.S."/>
            <person name="Comerci D.J."/>
            <person name="Tolmasky M.E."/>
            <person name="Larimer F.W."/>
            <person name="Malfatti S.A."/>
            <person name="Vergez L.M."/>
            <person name="Aguero F."/>
            <person name="Land M.L."/>
            <person name="Ugalde R.A."/>
            <person name="Garcia E."/>
        </authorList>
    </citation>
    <scope>NUCLEOTIDE SEQUENCE [LARGE SCALE GENOMIC DNA]</scope>
    <source>
        <strain>2308</strain>
    </source>
</reference>
<keyword id="KW-0067">ATP-binding</keyword>
<keyword id="KW-0418">Kinase</keyword>
<keyword id="KW-0441">Lipid A biosynthesis</keyword>
<keyword id="KW-0444">Lipid biosynthesis</keyword>
<keyword id="KW-0443">Lipid metabolism</keyword>
<keyword id="KW-0547">Nucleotide-binding</keyword>
<keyword id="KW-1185">Reference proteome</keyword>
<keyword id="KW-0808">Transferase</keyword>
<accession>Q2YIH4</accession>
<comment type="function">
    <text evidence="1">Transfers the gamma-phosphate of ATP to the 4'-position of a tetraacyldisaccharide 1-phosphate intermediate (termed DS-1-P) to form tetraacyldisaccharide 1,4'-bis-phosphate (lipid IVA).</text>
</comment>
<comment type="catalytic activity">
    <reaction evidence="1">
        <text>a lipid A disaccharide + ATP = a lipid IVA + ADP + H(+)</text>
        <dbReference type="Rhea" id="RHEA:67840"/>
        <dbReference type="ChEBI" id="CHEBI:15378"/>
        <dbReference type="ChEBI" id="CHEBI:30616"/>
        <dbReference type="ChEBI" id="CHEBI:176343"/>
        <dbReference type="ChEBI" id="CHEBI:176425"/>
        <dbReference type="ChEBI" id="CHEBI:456216"/>
        <dbReference type="EC" id="2.7.1.130"/>
    </reaction>
</comment>
<comment type="pathway">
    <text evidence="1">Glycolipid biosynthesis; lipid IV(A) biosynthesis; lipid IV(A) from (3R)-3-hydroxytetradecanoyl-[acyl-carrier-protein] and UDP-N-acetyl-alpha-D-glucosamine: step 6/6.</text>
</comment>
<comment type="similarity">
    <text evidence="1">Belongs to the LpxK family.</text>
</comment>
<evidence type="ECO:0000255" key="1">
    <source>
        <dbReference type="HAMAP-Rule" id="MF_00409"/>
    </source>
</evidence>
<proteinExistence type="inferred from homology"/>
<dbReference type="EC" id="2.7.1.130" evidence="1"/>
<dbReference type="EMBL" id="AM040265">
    <property type="protein sequence ID" value="CAJ12376.1"/>
    <property type="molecule type" value="Genomic_DNA"/>
</dbReference>
<dbReference type="RefSeq" id="WP_002966366.1">
    <property type="nucleotide sequence ID" value="NZ_KN046823.1"/>
</dbReference>
<dbReference type="SMR" id="Q2YIH4"/>
<dbReference type="STRING" id="359391.BAB2_0210"/>
<dbReference type="GeneID" id="97535597"/>
<dbReference type="KEGG" id="bmf:BAB2_0210"/>
<dbReference type="PATRIC" id="fig|359391.11.peg.2160"/>
<dbReference type="HOGENOM" id="CLU_038816_0_0_5"/>
<dbReference type="PhylomeDB" id="Q2YIH4"/>
<dbReference type="BioCyc" id="MetaCyc:BAB_RS27370-MONOMER"/>
<dbReference type="UniPathway" id="UPA00359">
    <property type="reaction ID" value="UER00482"/>
</dbReference>
<dbReference type="Proteomes" id="UP000002719">
    <property type="component" value="Chromosome II"/>
</dbReference>
<dbReference type="GO" id="GO:0005886">
    <property type="term" value="C:plasma membrane"/>
    <property type="evidence" value="ECO:0007669"/>
    <property type="project" value="TreeGrafter"/>
</dbReference>
<dbReference type="GO" id="GO:0005524">
    <property type="term" value="F:ATP binding"/>
    <property type="evidence" value="ECO:0007669"/>
    <property type="project" value="UniProtKB-UniRule"/>
</dbReference>
<dbReference type="GO" id="GO:0009029">
    <property type="term" value="F:tetraacyldisaccharide 4'-kinase activity"/>
    <property type="evidence" value="ECO:0007669"/>
    <property type="project" value="UniProtKB-UniRule"/>
</dbReference>
<dbReference type="GO" id="GO:0009245">
    <property type="term" value="P:lipid A biosynthetic process"/>
    <property type="evidence" value="ECO:0007669"/>
    <property type="project" value="UniProtKB-UniRule"/>
</dbReference>
<dbReference type="GO" id="GO:0009244">
    <property type="term" value="P:lipopolysaccharide core region biosynthetic process"/>
    <property type="evidence" value="ECO:0007669"/>
    <property type="project" value="TreeGrafter"/>
</dbReference>
<dbReference type="HAMAP" id="MF_00409">
    <property type="entry name" value="LpxK"/>
    <property type="match status" value="1"/>
</dbReference>
<dbReference type="InterPro" id="IPR003758">
    <property type="entry name" value="LpxK"/>
</dbReference>
<dbReference type="InterPro" id="IPR027417">
    <property type="entry name" value="P-loop_NTPase"/>
</dbReference>
<dbReference type="NCBIfam" id="TIGR00682">
    <property type="entry name" value="lpxK"/>
    <property type="match status" value="1"/>
</dbReference>
<dbReference type="PANTHER" id="PTHR42724">
    <property type="entry name" value="TETRAACYLDISACCHARIDE 4'-KINASE"/>
    <property type="match status" value="1"/>
</dbReference>
<dbReference type="PANTHER" id="PTHR42724:SF1">
    <property type="entry name" value="TETRAACYLDISACCHARIDE 4'-KINASE, MITOCHONDRIAL-RELATED"/>
    <property type="match status" value="1"/>
</dbReference>
<dbReference type="Pfam" id="PF02606">
    <property type="entry name" value="LpxK"/>
    <property type="match status" value="1"/>
</dbReference>
<dbReference type="SUPFAM" id="SSF52540">
    <property type="entry name" value="P-loop containing nucleoside triphosphate hydrolases"/>
    <property type="match status" value="1"/>
</dbReference>